<feature type="chain" id="PRO_1000079169" description="Probable GTP-binding protein EngB">
    <location>
        <begin position="1"/>
        <end position="205"/>
    </location>
</feature>
<feature type="domain" description="EngB-type G" evidence="1">
    <location>
        <begin position="29"/>
        <end position="203"/>
    </location>
</feature>
<feature type="binding site" evidence="1">
    <location>
        <begin position="37"/>
        <end position="44"/>
    </location>
    <ligand>
        <name>GTP</name>
        <dbReference type="ChEBI" id="CHEBI:37565"/>
    </ligand>
</feature>
<feature type="binding site" evidence="1">
    <location>
        <position position="44"/>
    </location>
    <ligand>
        <name>Mg(2+)</name>
        <dbReference type="ChEBI" id="CHEBI:18420"/>
    </ligand>
</feature>
<feature type="binding site" evidence="1">
    <location>
        <begin position="64"/>
        <end position="68"/>
    </location>
    <ligand>
        <name>GTP</name>
        <dbReference type="ChEBI" id="CHEBI:37565"/>
    </ligand>
</feature>
<feature type="binding site" evidence="1">
    <location>
        <position position="66"/>
    </location>
    <ligand>
        <name>Mg(2+)</name>
        <dbReference type="ChEBI" id="CHEBI:18420"/>
    </ligand>
</feature>
<feature type="binding site" evidence="1">
    <location>
        <begin position="82"/>
        <end position="85"/>
    </location>
    <ligand>
        <name>GTP</name>
        <dbReference type="ChEBI" id="CHEBI:37565"/>
    </ligand>
</feature>
<feature type="binding site" evidence="1">
    <location>
        <begin position="149"/>
        <end position="152"/>
    </location>
    <ligand>
        <name>GTP</name>
        <dbReference type="ChEBI" id="CHEBI:37565"/>
    </ligand>
</feature>
<feature type="binding site" evidence="1">
    <location>
        <begin position="182"/>
        <end position="184"/>
    </location>
    <ligand>
        <name>GTP</name>
        <dbReference type="ChEBI" id="CHEBI:37565"/>
    </ligand>
</feature>
<comment type="function">
    <text evidence="1">Necessary for normal cell division and for the maintenance of normal septation.</text>
</comment>
<comment type="cofactor">
    <cofactor evidence="1">
        <name>Mg(2+)</name>
        <dbReference type="ChEBI" id="CHEBI:18420"/>
    </cofactor>
</comment>
<comment type="similarity">
    <text evidence="1">Belongs to the TRAFAC class TrmE-Era-EngA-EngB-Septin-like GTPase superfamily. EngB GTPase family.</text>
</comment>
<keyword id="KW-0131">Cell cycle</keyword>
<keyword id="KW-0132">Cell division</keyword>
<keyword id="KW-0342">GTP-binding</keyword>
<keyword id="KW-0460">Magnesium</keyword>
<keyword id="KW-0479">Metal-binding</keyword>
<keyword id="KW-0547">Nucleotide-binding</keyword>
<keyword id="KW-0717">Septation</keyword>
<evidence type="ECO:0000255" key="1">
    <source>
        <dbReference type="HAMAP-Rule" id="MF_00321"/>
    </source>
</evidence>
<proteinExistence type="inferred from homology"/>
<name>ENGB_COXBR</name>
<accession>A9NAD8</accession>
<reference key="1">
    <citation type="submission" date="2007-11" db="EMBL/GenBank/DDBJ databases">
        <title>Genome sequencing of phylogenetically and phenotypically diverse Coxiella burnetii isolates.</title>
        <authorList>
            <person name="Seshadri R."/>
            <person name="Samuel J.E."/>
        </authorList>
    </citation>
    <scope>NUCLEOTIDE SEQUENCE [LARGE SCALE GENOMIC DNA]</scope>
    <source>
        <strain>RSA 331 / Henzerling II</strain>
    </source>
</reference>
<dbReference type="EMBL" id="CP000890">
    <property type="protein sequence ID" value="ABX77710.1"/>
    <property type="molecule type" value="Genomic_DNA"/>
</dbReference>
<dbReference type="SMR" id="A9NAD8"/>
<dbReference type="KEGG" id="cbs:COXBURSA331_A1968"/>
<dbReference type="HOGENOM" id="CLU_033732_1_0_6"/>
<dbReference type="GO" id="GO:0005829">
    <property type="term" value="C:cytosol"/>
    <property type="evidence" value="ECO:0007669"/>
    <property type="project" value="TreeGrafter"/>
</dbReference>
<dbReference type="GO" id="GO:0005525">
    <property type="term" value="F:GTP binding"/>
    <property type="evidence" value="ECO:0007669"/>
    <property type="project" value="UniProtKB-UniRule"/>
</dbReference>
<dbReference type="GO" id="GO:0046872">
    <property type="term" value="F:metal ion binding"/>
    <property type="evidence" value="ECO:0007669"/>
    <property type="project" value="UniProtKB-KW"/>
</dbReference>
<dbReference type="GO" id="GO:0000917">
    <property type="term" value="P:division septum assembly"/>
    <property type="evidence" value="ECO:0007669"/>
    <property type="project" value="UniProtKB-KW"/>
</dbReference>
<dbReference type="CDD" id="cd01876">
    <property type="entry name" value="YihA_EngB"/>
    <property type="match status" value="1"/>
</dbReference>
<dbReference type="FunFam" id="3.40.50.300:FF:000098">
    <property type="entry name" value="Probable GTP-binding protein EngB"/>
    <property type="match status" value="1"/>
</dbReference>
<dbReference type="Gene3D" id="3.40.50.300">
    <property type="entry name" value="P-loop containing nucleotide triphosphate hydrolases"/>
    <property type="match status" value="1"/>
</dbReference>
<dbReference type="HAMAP" id="MF_00321">
    <property type="entry name" value="GTPase_EngB"/>
    <property type="match status" value="1"/>
</dbReference>
<dbReference type="InterPro" id="IPR030393">
    <property type="entry name" value="G_ENGB_dom"/>
</dbReference>
<dbReference type="InterPro" id="IPR006073">
    <property type="entry name" value="GTP-bd"/>
</dbReference>
<dbReference type="InterPro" id="IPR019987">
    <property type="entry name" value="GTP-bd_ribosome_bio_YsxC"/>
</dbReference>
<dbReference type="InterPro" id="IPR027417">
    <property type="entry name" value="P-loop_NTPase"/>
</dbReference>
<dbReference type="NCBIfam" id="TIGR03598">
    <property type="entry name" value="GTPase_YsxC"/>
    <property type="match status" value="1"/>
</dbReference>
<dbReference type="PANTHER" id="PTHR11649:SF13">
    <property type="entry name" value="ENGB-TYPE G DOMAIN-CONTAINING PROTEIN"/>
    <property type="match status" value="1"/>
</dbReference>
<dbReference type="PANTHER" id="PTHR11649">
    <property type="entry name" value="MSS1/TRME-RELATED GTP-BINDING PROTEIN"/>
    <property type="match status" value="1"/>
</dbReference>
<dbReference type="Pfam" id="PF01926">
    <property type="entry name" value="MMR_HSR1"/>
    <property type="match status" value="1"/>
</dbReference>
<dbReference type="SUPFAM" id="SSF52540">
    <property type="entry name" value="P-loop containing nucleoside triphosphate hydrolases"/>
    <property type="match status" value="1"/>
</dbReference>
<dbReference type="PROSITE" id="PS51706">
    <property type="entry name" value="G_ENGB"/>
    <property type="match status" value="1"/>
</dbReference>
<organism>
    <name type="scientific">Coxiella burnetii (strain RSA 331 / Henzerling II)</name>
    <dbReference type="NCBI Taxonomy" id="360115"/>
    <lineage>
        <taxon>Bacteria</taxon>
        <taxon>Pseudomonadati</taxon>
        <taxon>Pseudomonadota</taxon>
        <taxon>Gammaproteobacteria</taxon>
        <taxon>Legionellales</taxon>
        <taxon>Coxiellaceae</taxon>
        <taxon>Coxiella</taxon>
    </lineage>
</organism>
<protein>
    <recommendedName>
        <fullName evidence="1">Probable GTP-binding protein EngB</fullName>
    </recommendedName>
</protein>
<sequence>MTEFESAPAYQEAKYLTSAAEFDQLPPDQGAEIAFIGRSNAGKSSALNIITGIKGLARTSKTPGRTQMINFFALNEHERLVDLPGYGYAKVPRMVQKRWEELVDSYLKNRRCLKGLVVVMDIRHPLKEMDEDVIEWAVNYDIPIHILLTKSDKLSQNAAKKTLGEVQTAISAYGEKLTLQLFSSHDRTGLDEVKAVLSQWFRSEP</sequence>
<gene>
    <name evidence="1" type="primary">engB</name>
    <name type="ordered locus">COXBURSA331_A1968</name>
</gene>